<organism>
    <name type="scientific">Syntrophotalea carbinolica (strain DSM 2380 / NBRC 103641 / GraBd1)</name>
    <name type="common">Pelobacter carbinolicus</name>
    <dbReference type="NCBI Taxonomy" id="338963"/>
    <lineage>
        <taxon>Bacteria</taxon>
        <taxon>Pseudomonadati</taxon>
        <taxon>Thermodesulfobacteriota</taxon>
        <taxon>Desulfuromonadia</taxon>
        <taxon>Desulfuromonadales</taxon>
        <taxon>Syntrophotaleaceae</taxon>
        <taxon>Syntrophotalea</taxon>
    </lineage>
</organism>
<sequence>MMRLLSFDDSDFGAALGAIVARGETPPEGVEETVAEILEAVRLQGDRALLEYTTRFDGLDLTAAQLQVTAEEIEAALAAVDSESMAALQLAADRIAAFHRRQKTETWLTTDEQDVMLGQMVQPLERVGIYVPGGKASYPSSVLMNAIPAKVAGVAEVVMVVPMPHGEVNPHVLAAAHLAGVDRIFKIGGAQAVAALAYGTESVPRVDKITGPGNIYVATAKKMVFGQVDIDMIAGPSEILVINDGSGTPEHIAVDLLSQAEHDELAAAILVTTDADFGRRVQQAVEEQLATLKRAAIARCSIDAFGAILVARDLEQAVALSNSIAPEHLELAVDDPFSLLPRIRHAGAIFMGHHCPEAAGDYLAGPNHTLPTGGTARFFSPLGVDDFVKKSSIISFSREGLDRLGRSIVHLAELEGLEAHGRSVSIRLKDS</sequence>
<name>HISX_SYNC1</name>
<reference key="1">
    <citation type="submission" date="2005-10" db="EMBL/GenBank/DDBJ databases">
        <title>Complete sequence of Pelobacter carbinolicus DSM 2380.</title>
        <authorList>
            <person name="Copeland A."/>
            <person name="Lucas S."/>
            <person name="Lapidus A."/>
            <person name="Barry K."/>
            <person name="Detter J.C."/>
            <person name="Glavina T."/>
            <person name="Hammon N."/>
            <person name="Israni S."/>
            <person name="Pitluck S."/>
            <person name="Chertkov O."/>
            <person name="Schmutz J."/>
            <person name="Larimer F."/>
            <person name="Land M."/>
            <person name="Kyrpides N."/>
            <person name="Ivanova N."/>
            <person name="Richardson P."/>
        </authorList>
    </citation>
    <scope>NUCLEOTIDE SEQUENCE [LARGE SCALE GENOMIC DNA]</scope>
    <source>
        <strain>DSM 2380 / NBRC 103641 / GraBd1</strain>
    </source>
</reference>
<dbReference type="EC" id="1.1.1.23" evidence="1"/>
<dbReference type="EMBL" id="CP000142">
    <property type="protein sequence ID" value="ABA89924.1"/>
    <property type="molecule type" value="Genomic_DNA"/>
</dbReference>
<dbReference type="RefSeq" id="WP_011342467.1">
    <property type="nucleotide sequence ID" value="NC_007498.2"/>
</dbReference>
<dbReference type="SMR" id="Q3A133"/>
<dbReference type="STRING" id="338963.Pcar_2688"/>
<dbReference type="KEGG" id="pca:Pcar_2688"/>
<dbReference type="eggNOG" id="COG0141">
    <property type="taxonomic scope" value="Bacteria"/>
</dbReference>
<dbReference type="HOGENOM" id="CLU_006732_3_3_7"/>
<dbReference type="OrthoDB" id="9805269at2"/>
<dbReference type="UniPathway" id="UPA00031">
    <property type="reaction ID" value="UER00014"/>
</dbReference>
<dbReference type="Proteomes" id="UP000002534">
    <property type="component" value="Chromosome"/>
</dbReference>
<dbReference type="GO" id="GO:0005829">
    <property type="term" value="C:cytosol"/>
    <property type="evidence" value="ECO:0007669"/>
    <property type="project" value="TreeGrafter"/>
</dbReference>
<dbReference type="GO" id="GO:0004399">
    <property type="term" value="F:histidinol dehydrogenase activity"/>
    <property type="evidence" value="ECO:0007669"/>
    <property type="project" value="UniProtKB-UniRule"/>
</dbReference>
<dbReference type="GO" id="GO:0051287">
    <property type="term" value="F:NAD binding"/>
    <property type="evidence" value="ECO:0007669"/>
    <property type="project" value="InterPro"/>
</dbReference>
<dbReference type="GO" id="GO:0008270">
    <property type="term" value="F:zinc ion binding"/>
    <property type="evidence" value="ECO:0007669"/>
    <property type="project" value="UniProtKB-UniRule"/>
</dbReference>
<dbReference type="GO" id="GO:0000105">
    <property type="term" value="P:L-histidine biosynthetic process"/>
    <property type="evidence" value="ECO:0007669"/>
    <property type="project" value="UniProtKB-UniRule"/>
</dbReference>
<dbReference type="CDD" id="cd06572">
    <property type="entry name" value="Histidinol_dh"/>
    <property type="match status" value="1"/>
</dbReference>
<dbReference type="FunFam" id="3.40.50.1980:FF:000001">
    <property type="entry name" value="Histidinol dehydrogenase"/>
    <property type="match status" value="1"/>
</dbReference>
<dbReference type="FunFam" id="3.40.50.1980:FF:000026">
    <property type="entry name" value="Histidinol dehydrogenase"/>
    <property type="match status" value="1"/>
</dbReference>
<dbReference type="FunFam" id="1.20.5.1300:FF:000002">
    <property type="entry name" value="Histidinol dehydrogenase, chloroplastic"/>
    <property type="match status" value="1"/>
</dbReference>
<dbReference type="Gene3D" id="1.20.5.1300">
    <property type="match status" value="1"/>
</dbReference>
<dbReference type="Gene3D" id="3.40.50.1980">
    <property type="entry name" value="Nitrogenase molybdenum iron protein domain"/>
    <property type="match status" value="2"/>
</dbReference>
<dbReference type="HAMAP" id="MF_01024">
    <property type="entry name" value="HisD"/>
    <property type="match status" value="1"/>
</dbReference>
<dbReference type="InterPro" id="IPR016161">
    <property type="entry name" value="Ald_DH/histidinol_DH"/>
</dbReference>
<dbReference type="InterPro" id="IPR001692">
    <property type="entry name" value="Histidinol_DH_CS"/>
</dbReference>
<dbReference type="InterPro" id="IPR022695">
    <property type="entry name" value="Histidinol_DH_monofunct"/>
</dbReference>
<dbReference type="InterPro" id="IPR012131">
    <property type="entry name" value="Hstdl_DH"/>
</dbReference>
<dbReference type="NCBIfam" id="TIGR00069">
    <property type="entry name" value="hisD"/>
    <property type="match status" value="1"/>
</dbReference>
<dbReference type="PANTHER" id="PTHR21256:SF2">
    <property type="entry name" value="HISTIDINE BIOSYNTHESIS TRIFUNCTIONAL PROTEIN"/>
    <property type="match status" value="1"/>
</dbReference>
<dbReference type="PANTHER" id="PTHR21256">
    <property type="entry name" value="HISTIDINOL DEHYDROGENASE HDH"/>
    <property type="match status" value="1"/>
</dbReference>
<dbReference type="Pfam" id="PF00815">
    <property type="entry name" value="Histidinol_dh"/>
    <property type="match status" value="1"/>
</dbReference>
<dbReference type="PIRSF" id="PIRSF000099">
    <property type="entry name" value="Histidinol_dh"/>
    <property type="match status" value="1"/>
</dbReference>
<dbReference type="PRINTS" id="PR00083">
    <property type="entry name" value="HOLDHDRGNASE"/>
</dbReference>
<dbReference type="SUPFAM" id="SSF53720">
    <property type="entry name" value="ALDH-like"/>
    <property type="match status" value="1"/>
</dbReference>
<dbReference type="PROSITE" id="PS00611">
    <property type="entry name" value="HISOL_DEHYDROGENASE"/>
    <property type="match status" value="1"/>
</dbReference>
<evidence type="ECO:0000255" key="1">
    <source>
        <dbReference type="HAMAP-Rule" id="MF_01024"/>
    </source>
</evidence>
<comment type="function">
    <text evidence="1">Catalyzes the sequential NAD-dependent oxidations of L-histidinol to L-histidinaldehyde and then to L-histidine.</text>
</comment>
<comment type="catalytic activity">
    <reaction evidence="1">
        <text>L-histidinol + 2 NAD(+) + H2O = L-histidine + 2 NADH + 3 H(+)</text>
        <dbReference type="Rhea" id="RHEA:20641"/>
        <dbReference type="ChEBI" id="CHEBI:15377"/>
        <dbReference type="ChEBI" id="CHEBI:15378"/>
        <dbReference type="ChEBI" id="CHEBI:57540"/>
        <dbReference type="ChEBI" id="CHEBI:57595"/>
        <dbReference type="ChEBI" id="CHEBI:57699"/>
        <dbReference type="ChEBI" id="CHEBI:57945"/>
        <dbReference type="EC" id="1.1.1.23"/>
    </reaction>
</comment>
<comment type="cofactor">
    <cofactor evidence="1">
        <name>Zn(2+)</name>
        <dbReference type="ChEBI" id="CHEBI:29105"/>
    </cofactor>
    <text evidence="1">Binds 1 zinc ion per subunit.</text>
</comment>
<comment type="pathway">
    <text evidence="1">Amino-acid biosynthesis; L-histidine biosynthesis; L-histidine from 5-phospho-alpha-D-ribose 1-diphosphate: step 9/9.</text>
</comment>
<comment type="similarity">
    <text evidence="1">Belongs to the histidinol dehydrogenase family.</text>
</comment>
<feature type="chain" id="PRO_0000135811" description="Histidinol dehydrogenase">
    <location>
        <begin position="1"/>
        <end position="431"/>
    </location>
</feature>
<feature type="active site" description="Proton acceptor" evidence="1">
    <location>
        <position position="327"/>
    </location>
</feature>
<feature type="active site" description="Proton acceptor" evidence="1">
    <location>
        <position position="328"/>
    </location>
</feature>
<feature type="binding site" evidence="1">
    <location>
        <position position="130"/>
    </location>
    <ligand>
        <name>NAD(+)</name>
        <dbReference type="ChEBI" id="CHEBI:57540"/>
    </ligand>
</feature>
<feature type="binding site" evidence="1">
    <location>
        <position position="191"/>
    </location>
    <ligand>
        <name>NAD(+)</name>
        <dbReference type="ChEBI" id="CHEBI:57540"/>
    </ligand>
</feature>
<feature type="binding site" evidence="1">
    <location>
        <position position="214"/>
    </location>
    <ligand>
        <name>NAD(+)</name>
        <dbReference type="ChEBI" id="CHEBI:57540"/>
    </ligand>
</feature>
<feature type="binding site" evidence="1">
    <location>
        <position position="237"/>
    </location>
    <ligand>
        <name>substrate</name>
    </ligand>
</feature>
<feature type="binding site" evidence="1">
    <location>
        <position position="259"/>
    </location>
    <ligand>
        <name>substrate</name>
    </ligand>
</feature>
<feature type="binding site" evidence="1">
    <location>
        <position position="259"/>
    </location>
    <ligand>
        <name>Zn(2+)</name>
        <dbReference type="ChEBI" id="CHEBI:29105"/>
    </ligand>
</feature>
<feature type="binding site" evidence="1">
    <location>
        <position position="262"/>
    </location>
    <ligand>
        <name>substrate</name>
    </ligand>
</feature>
<feature type="binding site" evidence="1">
    <location>
        <position position="262"/>
    </location>
    <ligand>
        <name>Zn(2+)</name>
        <dbReference type="ChEBI" id="CHEBI:29105"/>
    </ligand>
</feature>
<feature type="binding site" evidence="1">
    <location>
        <position position="328"/>
    </location>
    <ligand>
        <name>substrate</name>
    </ligand>
</feature>
<feature type="binding site" evidence="1">
    <location>
        <position position="361"/>
    </location>
    <ligand>
        <name>substrate</name>
    </ligand>
</feature>
<feature type="binding site" evidence="1">
    <location>
        <position position="361"/>
    </location>
    <ligand>
        <name>Zn(2+)</name>
        <dbReference type="ChEBI" id="CHEBI:29105"/>
    </ligand>
</feature>
<feature type="binding site" evidence="1">
    <location>
        <position position="415"/>
    </location>
    <ligand>
        <name>substrate</name>
    </ligand>
</feature>
<feature type="binding site" evidence="1">
    <location>
        <position position="420"/>
    </location>
    <ligand>
        <name>substrate</name>
    </ligand>
</feature>
<feature type="binding site" evidence="1">
    <location>
        <position position="420"/>
    </location>
    <ligand>
        <name>Zn(2+)</name>
        <dbReference type="ChEBI" id="CHEBI:29105"/>
    </ligand>
</feature>
<gene>
    <name evidence="1" type="primary">hisD</name>
    <name type="ordered locus">Pcar_2688</name>
</gene>
<accession>Q3A133</accession>
<keyword id="KW-0028">Amino-acid biosynthesis</keyword>
<keyword id="KW-0368">Histidine biosynthesis</keyword>
<keyword id="KW-0479">Metal-binding</keyword>
<keyword id="KW-0520">NAD</keyword>
<keyword id="KW-0560">Oxidoreductase</keyword>
<keyword id="KW-1185">Reference proteome</keyword>
<keyword id="KW-0862">Zinc</keyword>
<protein>
    <recommendedName>
        <fullName evidence="1">Histidinol dehydrogenase</fullName>
        <shortName evidence="1">HDH</shortName>
        <ecNumber evidence="1">1.1.1.23</ecNumber>
    </recommendedName>
</protein>
<proteinExistence type="inferred from homology"/>